<protein>
    <recommendedName>
        <fullName>Eukaryotic translation initiation factor 4E type 3</fullName>
        <shortName>eIF-4E type 3</shortName>
        <shortName>eIF-4E3</shortName>
        <shortName>eIF4E type 3</shortName>
        <shortName>eIF4E-3</shortName>
    </recommendedName>
</protein>
<gene>
    <name type="primary">eif4e3</name>
    <name type="ORF">TGas108j06.1</name>
</gene>
<organism>
    <name type="scientific">Xenopus tropicalis</name>
    <name type="common">Western clawed frog</name>
    <name type="synonym">Silurana tropicalis</name>
    <dbReference type="NCBI Taxonomy" id="8364"/>
    <lineage>
        <taxon>Eukaryota</taxon>
        <taxon>Metazoa</taxon>
        <taxon>Chordata</taxon>
        <taxon>Craniata</taxon>
        <taxon>Vertebrata</taxon>
        <taxon>Euteleostomi</taxon>
        <taxon>Amphibia</taxon>
        <taxon>Batrachia</taxon>
        <taxon>Anura</taxon>
        <taxon>Pipoidea</taxon>
        <taxon>Pipidae</taxon>
        <taxon>Xenopodinae</taxon>
        <taxon>Xenopus</taxon>
        <taxon>Silurana</taxon>
    </lineage>
</organism>
<proteinExistence type="evidence at transcript level"/>
<dbReference type="EMBL" id="CR762349">
    <property type="protein sequence ID" value="CAJ83493.1"/>
    <property type="molecule type" value="mRNA"/>
</dbReference>
<dbReference type="RefSeq" id="NP_001016049.1">
    <property type="nucleotide sequence ID" value="NM_001016049.2"/>
</dbReference>
<dbReference type="SMR" id="Q28ET8"/>
<dbReference type="FunCoup" id="Q28ET8">
    <property type="interactions" value="77"/>
</dbReference>
<dbReference type="STRING" id="8364.ENSXETP00000010993"/>
<dbReference type="PaxDb" id="8364-ENSXETP00000034697"/>
<dbReference type="GeneID" id="548803"/>
<dbReference type="KEGG" id="xtr:548803"/>
<dbReference type="AGR" id="Xenbase:XB-GENE-992071"/>
<dbReference type="CTD" id="317649"/>
<dbReference type="Xenbase" id="XB-GENE-992071">
    <property type="gene designation" value="eif4e3"/>
</dbReference>
<dbReference type="eggNOG" id="ENOG502QPP4">
    <property type="taxonomic scope" value="Eukaryota"/>
</dbReference>
<dbReference type="HOGENOM" id="CLU_043552_5_1_1"/>
<dbReference type="InParanoid" id="Q28ET8"/>
<dbReference type="OMA" id="LPLQYHW"/>
<dbReference type="OrthoDB" id="17977at2759"/>
<dbReference type="Reactome" id="R-XTR-1169408">
    <property type="pathway name" value="ISG15 antiviral mechanism"/>
</dbReference>
<dbReference type="Proteomes" id="UP000008143">
    <property type="component" value="Chromosome 4"/>
</dbReference>
<dbReference type="GO" id="GO:0003723">
    <property type="term" value="F:RNA binding"/>
    <property type="evidence" value="ECO:0007669"/>
    <property type="project" value="UniProtKB-KW"/>
</dbReference>
<dbReference type="GO" id="GO:0003743">
    <property type="term" value="F:translation initiation factor activity"/>
    <property type="evidence" value="ECO:0007669"/>
    <property type="project" value="UniProtKB-KW"/>
</dbReference>
<dbReference type="GO" id="GO:0006417">
    <property type="term" value="P:regulation of translation"/>
    <property type="evidence" value="ECO:0007669"/>
    <property type="project" value="UniProtKB-KW"/>
</dbReference>
<dbReference type="FunFam" id="3.30.760.10:FF:000007">
    <property type="entry name" value="Eukaryotic translation initiation factor 4E family member 3"/>
    <property type="match status" value="1"/>
</dbReference>
<dbReference type="Gene3D" id="3.30.760.10">
    <property type="entry name" value="RNA Cap, Translation Initiation Factor Eif4e"/>
    <property type="match status" value="1"/>
</dbReference>
<dbReference type="InterPro" id="IPR023398">
    <property type="entry name" value="TIF_eIF4e-like"/>
</dbReference>
<dbReference type="InterPro" id="IPR001040">
    <property type="entry name" value="TIF_eIF_4E"/>
</dbReference>
<dbReference type="PANTHER" id="PTHR11960">
    <property type="entry name" value="EUKARYOTIC TRANSLATION INITIATION FACTOR 4E RELATED"/>
    <property type="match status" value="1"/>
</dbReference>
<dbReference type="PANTHER" id="PTHR11960:SF66">
    <property type="entry name" value="EUKARYOTIC TRANSLATION INITIATION FACTOR 4E TYPE 3"/>
    <property type="match status" value="1"/>
</dbReference>
<dbReference type="Pfam" id="PF01652">
    <property type="entry name" value="IF4E"/>
    <property type="match status" value="1"/>
</dbReference>
<dbReference type="SUPFAM" id="SSF55418">
    <property type="entry name" value="eIF4e-like"/>
    <property type="match status" value="1"/>
</dbReference>
<sequence>MALPAAPADRRLQPEPDEQLHLNHRELGELALPQEPDTEGIPLHSPWTFWLDRSLPGTTAAECESNLKKIYTVHTIQSFWSVYNNIPQVTNLPLRWSYHLMRGERKPLWEEESNAKGGVWKMKVPKEASSLVWKELLLATIGEQFTDRCAPEDEVIGVSVSVRDREDVVQVWNGNASVVGEATVLEKIYELLPNTSFKAVFYKPHEEHHAFEGGRSRH</sequence>
<accession>Q28ET8</accession>
<comment type="function">
    <text evidence="1">Recognizes and binds the 7-methylguanosine-containing mRNA cap during an early step in the initiation of protein synthesis.</text>
</comment>
<comment type="subunit">
    <text evidence="1">eIF4F is a multi-subunit complex, the composition of which varies with external and internal environmental conditions. It is composed of at least eIF4A, eIF4E and eIF4G (By similarity).</text>
</comment>
<comment type="similarity">
    <text evidence="3">Belongs to the eukaryotic initiation factor 4E family.</text>
</comment>
<name>IF4E3_XENTR</name>
<reference key="1">
    <citation type="submission" date="2006-10" db="EMBL/GenBank/DDBJ databases">
        <authorList>
            <consortium name="Sanger Xenopus tropicalis EST/cDNA project"/>
        </authorList>
    </citation>
    <scope>NUCLEOTIDE SEQUENCE [LARGE SCALE MRNA]</scope>
    <source>
        <tissue>Gastrula</tissue>
    </source>
</reference>
<evidence type="ECO:0000250" key="1"/>
<evidence type="ECO:0000256" key="2">
    <source>
        <dbReference type="SAM" id="MobiDB-lite"/>
    </source>
</evidence>
<evidence type="ECO:0000305" key="3"/>
<feature type="chain" id="PRO_0000287702" description="Eukaryotic translation initiation factor 4E type 3">
    <location>
        <begin position="1"/>
        <end position="218"/>
    </location>
</feature>
<feature type="region of interest" description="Disordered" evidence="2">
    <location>
        <begin position="1"/>
        <end position="20"/>
    </location>
</feature>
<feature type="compositionally biased region" description="Basic and acidic residues" evidence="2">
    <location>
        <begin position="8"/>
        <end position="20"/>
    </location>
</feature>
<feature type="binding site" evidence="1">
    <location>
        <begin position="109"/>
        <end position="110"/>
    </location>
    <ligand>
        <name>mRNA</name>
        <dbReference type="ChEBI" id="CHEBI:33699"/>
    </ligand>
    <ligandPart>
        <name>N(7)-methylguanosine 5'-triphosphate group</name>
        <dbReference type="ChEBI" id="CHEBI:74429"/>
        <note>m7GTP residue in mRNA cap</note>
    </ligandPart>
</feature>
<feature type="binding site" evidence="1">
    <location>
        <begin position="163"/>
        <end position="168"/>
    </location>
    <ligand>
        <name>mRNA</name>
        <dbReference type="ChEBI" id="CHEBI:33699"/>
    </ligand>
    <ligandPart>
        <name>N(7)-methylguanosine 5'-triphosphate group</name>
        <dbReference type="ChEBI" id="CHEBI:74429"/>
        <note>m7GTP residue in mRNA cap</note>
    </ligandPart>
</feature>
<keyword id="KW-0396">Initiation factor</keyword>
<keyword id="KW-0648">Protein biosynthesis</keyword>
<keyword id="KW-1185">Reference proteome</keyword>
<keyword id="KW-0694">RNA-binding</keyword>
<keyword id="KW-0810">Translation regulation</keyword>